<name>SPEE_SHIFL</name>
<feature type="initiator methionine" description="Removed" evidence="1">
    <location>
        <position position="1"/>
    </location>
</feature>
<feature type="chain" id="PRO_0000156506" description="Polyamine aminopropyltransferase">
    <location>
        <begin position="2"/>
        <end position="288"/>
    </location>
</feature>
<feature type="domain" description="PABS" evidence="2">
    <location>
        <begin position="9"/>
        <end position="238"/>
    </location>
</feature>
<feature type="active site" description="Proton acceptor" evidence="2">
    <location>
        <position position="158"/>
    </location>
</feature>
<feature type="binding site" evidence="2">
    <location>
        <position position="33"/>
    </location>
    <ligand>
        <name>S-methyl-5'-thioadenosine</name>
        <dbReference type="ChEBI" id="CHEBI:17509"/>
    </ligand>
</feature>
<feature type="binding site" evidence="2">
    <location>
        <position position="64"/>
    </location>
    <ligand>
        <name>spermidine</name>
        <dbReference type="ChEBI" id="CHEBI:57834"/>
    </ligand>
</feature>
<feature type="binding site" evidence="2">
    <location>
        <position position="88"/>
    </location>
    <ligand>
        <name>spermidine</name>
        <dbReference type="ChEBI" id="CHEBI:57834"/>
    </ligand>
</feature>
<feature type="binding site" evidence="2">
    <location>
        <position position="108"/>
    </location>
    <ligand>
        <name>S-methyl-5'-thioadenosine</name>
        <dbReference type="ChEBI" id="CHEBI:17509"/>
    </ligand>
</feature>
<feature type="binding site" evidence="2">
    <location>
        <begin position="140"/>
        <end position="141"/>
    </location>
    <ligand>
        <name>S-methyl-5'-thioadenosine</name>
        <dbReference type="ChEBI" id="CHEBI:17509"/>
    </ligand>
</feature>
<feature type="binding site" evidence="2">
    <location>
        <begin position="158"/>
        <end position="161"/>
    </location>
    <ligand>
        <name>spermidine</name>
        <dbReference type="ChEBI" id="CHEBI:57834"/>
    </ligand>
</feature>
<feature type="binding site" evidence="2">
    <location>
        <position position="165"/>
    </location>
    <ligand>
        <name>S-methyl-5'-thioadenosine</name>
        <dbReference type="ChEBI" id="CHEBI:17509"/>
    </ligand>
</feature>
<sequence>MAEKKQWHETLHDQFGQYFAVDNVLYHEKTDHQDLIIFENAAFGRVMALDGVVQTTERDEFIYHEMMTHVPLLAHGHAKHVLIIGGGDGAMLREVTRHKNVESITMVEIDAGVVSFCRQYLPNHNAGSYDDPRFQLVIDDGVNFVNQTSQTFDVIISDCTDPIGPGESLFTSAFYEGCKRCLNPGGIFVAQNGVCFLQQEEAIDSHRKLSHYFSDVGFYQAAIPTYYGGIMTFAWATDNDALRHLSTEIIQARFLASGLKCRYYNPAIHTAAFALPQYLQDALASQPS</sequence>
<evidence type="ECO:0000250" key="1"/>
<evidence type="ECO:0000255" key="2">
    <source>
        <dbReference type="HAMAP-Rule" id="MF_00198"/>
    </source>
</evidence>
<proteinExistence type="inferred from homology"/>
<accession>Q83MF0</accession>
<gene>
    <name evidence="2" type="primary">speE</name>
    <name type="ordered locus">SF0118</name>
    <name type="ordered locus">S0120</name>
</gene>
<protein>
    <recommendedName>
        <fullName evidence="2">Polyamine aminopropyltransferase</fullName>
    </recommendedName>
    <alternativeName>
        <fullName evidence="2">Putrescine aminopropyltransferase</fullName>
        <shortName evidence="2">PAPT</shortName>
    </alternativeName>
    <alternativeName>
        <fullName evidence="2">Spermidine synthase</fullName>
        <shortName evidence="2">SPDS</shortName>
        <shortName evidence="2">SPDSY</shortName>
        <ecNumber evidence="2">2.5.1.16</ecNumber>
    </alternativeName>
</protein>
<keyword id="KW-0963">Cytoplasm</keyword>
<keyword id="KW-0620">Polyamine biosynthesis</keyword>
<keyword id="KW-1185">Reference proteome</keyword>
<keyword id="KW-0745">Spermidine biosynthesis</keyword>
<keyword id="KW-0808">Transferase</keyword>
<dbReference type="EC" id="2.5.1.16" evidence="2"/>
<dbReference type="EMBL" id="AE005674">
    <property type="protein sequence ID" value="AAN41781.1"/>
    <property type="molecule type" value="Genomic_DNA"/>
</dbReference>
<dbReference type="EMBL" id="AE014073">
    <property type="protein sequence ID" value="AAP15662.1"/>
    <property type="molecule type" value="Genomic_DNA"/>
</dbReference>
<dbReference type="RefSeq" id="NP_706074.1">
    <property type="nucleotide sequence ID" value="NC_004337.2"/>
</dbReference>
<dbReference type="RefSeq" id="WP_000818422.1">
    <property type="nucleotide sequence ID" value="NZ_WPGW01000007.1"/>
</dbReference>
<dbReference type="SMR" id="Q83MF0"/>
<dbReference type="STRING" id="198214.SF0118"/>
<dbReference type="PaxDb" id="198214-SF0118"/>
<dbReference type="GeneID" id="1024480"/>
<dbReference type="KEGG" id="sfl:SF0118"/>
<dbReference type="KEGG" id="sfx:S0120"/>
<dbReference type="PATRIC" id="fig|198214.7.peg.134"/>
<dbReference type="HOGENOM" id="CLU_048199_0_0_6"/>
<dbReference type="UniPathway" id="UPA00248">
    <property type="reaction ID" value="UER00314"/>
</dbReference>
<dbReference type="Proteomes" id="UP000001006">
    <property type="component" value="Chromosome"/>
</dbReference>
<dbReference type="Proteomes" id="UP000002673">
    <property type="component" value="Chromosome"/>
</dbReference>
<dbReference type="GO" id="GO:0005829">
    <property type="term" value="C:cytosol"/>
    <property type="evidence" value="ECO:0007669"/>
    <property type="project" value="TreeGrafter"/>
</dbReference>
<dbReference type="GO" id="GO:0004766">
    <property type="term" value="F:spermidine synthase activity"/>
    <property type="evidence" value="ECO:0007669"/>
    <property type="project" value="UniProtKB-UniRule"/>
</dbReference>
<dbReference type="GO" id="GO:0008295">
    <property type="term" value="P:spermidine biosynthetic process"/>
    <property type="evidence" value="ECO:0007669"/>
    <property type="project" value="UniProtKB-UniRule"/>
</dbReference>
<dbReference type="CDD" id="cd02440">
    <property type="entry name" value="AdoMet_MTases"/>
    <property type="match status" value="1"/>
</dbReference>
<dbReference type="FunFam" id="2.30.140.10:FF:000002">
    <property type="entry name" value="Polyamine aminopropyltransferase"/>
    <property type="match status" value="1"/>
</dbReference>
<dbReference type="FunFam" id="3.40.50.150:FF:000026">
    <property type="entry name" value="Polyamine aminopropyltransferase"/>
    <property type="match status" value="1"/>
</dbReference>
<dbReference type="Gene3D" id="2.30.140.10">
    <property type="entry name" value="Spermidine synthase, tetramerisation domain"/>
    <property type="match status" value="1"/>
</dbReference>
<dbReference type="Gene3D" id="3.40.50.150">
    <property type="entry name" value="Vaccinia Virus protein VP39"/>
    <property type="match status" value="1"/>
</dbReference>
<dbReference type="HAMAP" id="MF_00198">
    <property type="entry name" value="Spermidine_synth"/>
    <property type="match status" value="1"/>
</dbReference>
<dbReference type="InterPro" id="IPR030374">
    <property type="entry name" value="PABS"/>
</dbReference>
<dbReference type="InterPro" id="IPR030373">
    <property type="entry name" value="PABS_CS"/>
</dbReference>
<dbReference type="InterPro" id="IPR029063">
    <property type="entry name" value="SAM-dependent_MTases_sf"/>
</dbReference>
<dbReference type="InterPro" id="IPR001045">
    <property type="entry name" value="Spermi_synthase"/>
</dbReference>
<dbReference type="InterPro" id="IPR035246">
    <property type="entry name" value="Spermidine_synt_N"/>
</dbReference>
<dbReference type="InterPro" id="IPR037163">
    <property type="entry name" value="Spermidine_synt_N_sf"/>
</dbReference>
<dbReference type="NCBIfam" id="NF037959">
    <property type="entry name" value="MFS_SpdSyn"/>
    <property type="match status" value="1"/>
</dbReference>
<dbReference type="NCBIfam" id="NF002010">
    <property type="entry name" value="PRK00811.1"/>
    <property type="match status" value="1"/>
</dbReference>
<dbReference type="NCBIfam" id="TIGR00417">
    <property type="entry name" value="speE"/>
    <property type="match status" value="1"/>
</dbReference>
<dbReference type="PANTHER" id="PTHR11558:SF11">
    <property type="entry name" value="SPERMIDINE SYNTHASE"/>
    <property type="match status" value="1"/>
</dbReference>
<dbReference type="PANTHER" id="PTHR11558">
    <property type="entry name" value="SPERMIDINE/SPERMINE SYNTHASE"/>
    <property type="match status" value="1"/>
</dbReference>
<dbReference type="Pfam" id="PF17284">
    <property type="entry name" value="Spermine_synt_N"/>
    <property type="match status" value="1"/>
</dbReference>
<dbReference type="Pfam" id="PF01564">
    <property type="entry name" value="Spermine_synth"/>
    <property type="match status" value="1"/>
</dbReference>
<dbReference type="SUPFAM" id="SSF53335">
    <property type="entry name" value="S-adenosyl-L-methionine-dependent methyltransferases"/>
    <property type="match status" value="1"/>
</dbReference>
<dbReference type="PROSITE" id="PS01330">
    <property type="entry name" value="PABS_1"/>
    <property type="match status" value="1"/>
</dbReference>
<dbReference type="PROSITE" id="PS51006">
    <property type="entry name" value="PABS_2"/>
    <property type="match status" value="1"/>
</dbReference>
<reference key="1">
    <citation type="journal article" date="2002" name="Nucleic Acids Res.">
        <title>Genome sequence of Shigella flexneri 2a: insights into pathogenicity through comparison with genomes of Escherichia coli K12 and O157.</title>
        <authorList>
            <person name="Jin Q."/>
            <person name="Yuan Z."/>
            <person name="Xu J."/>
            <person name="Wang Y."/>
            <person name="Shen Y."/>
            <person name="Lu W."/>
            <person name="Wang J."/>
            <person name="Liu H."/>
            <person name="Yang J."/>
            <person name="Yang F."/>
            <person name="Zhang X."/>
            <person name="Zhang J."/>
            <person name="Yang G."/>
            <person name="Wu H."/>
            <person name="Qu D."/>
            <person name="Dong J."/>
            <person name="Sun L."/>
            <person name="Xue Y."/>
            <person name="Zhao A."/>
            <person name="Gao Y."/>
            <person name="Zhu J."/>
            <person name="Kan B."/>
            <person name="Ding K."/>
            <person name="Chen S."/>
            <person name="Cheng H."/>
            <person name="Yao Z."/>
            <person name="He B."/>
            <person name="Chen R."/>
            <person name="Ma D."/>
            <person name="Qiang B."/>
            <person name="Wen Y."/>
            <person name="Hou Y."/>
            <person name="Yu J."/>
        </authorList>
    </citation>
    <scope>NUCLEOTIDE SEQUENCE [LARGE SCALE GENOMIC DNA]</scope>
    <source>
        <strain>301 / Serotype 2a</strain>
    </source>
</reference>
<reference key="2">
    <citation type="journal article" date="2003" name="Infect. Immun.">
        <title>Complete genome sequence and comparative genomics of Shigella flexneri serotype 2a strain 2457T.</title>
        <authorList>
            <person name="Wei J."/>
            <person name="Goldberg M.B."/>
            <person name="Burland V."/>
            <person name="Venkatesan M.M."/>
            <person name="Deng W."/>
            <person name="Fournier G."/>
            <person name="Mayhew G.F."/>
            <person name="Plunkett G. III"/>
            <person name="Rose D.J."/>
            <person name="Darling A."/>
            <person name="Mau B."/>
            <person name="Perna N.T."/>
            <person name="Payne S.M."/>
            <person name="Runyen-Janecky L.J."/>
            <person name="Zhou S."/>
            <person name="Schwartz D.C."/>
            <person name="Blattner F.R."/>
        </authorList>
    </citation>
    <scope>NUCLEOTIDE SEQUENCE [LARGE SCALE GENOMIC DNA]</scope>
    <source>
        <strain>ATCC 700930 / 2457T / Serotype 2a</strain>
    </source>
</reference>
<organism>
    <name type="scientific">Shigella flexneri</name>
    <dbReference type="NCBI Taxonomy" id="623"/>
    <lineage>
        <taxon>Bacteria</taxon>
        <taxon>Pseudomonadati</taxon>
        <taxon>Pseudomonadota</taxon>
        <taxon>Gammaproteobacteria</taxon>
        <taxon>Enterobacterales</taxon>
        <taxon>Enterobacteriaceae</taxon>
        <taxon>Shigella</taxon>
    </lineage>
</organism>
<comment type="function">
    <text evidence="2">Catalyzes the irreversible transfer of a propylamine group from the amino donor S-adenosylmethioninamine (decarboxy-AdoMet) to putrescine (1,4-diaminobutane) to yield spermidine.</text>
</comment>
<comment type="catalytic activity">
    <reaction evidence="2">
        <text>S-adenosyl 3-(methylsulfanyl)propylamine + putrescine = S-methyl-5'-thioadenosine + spermidine + H(+)</text>
        <dbReference type="Rhea" id="RHEA:12721"/>
        <dbReference type="ChEBI" id="CHEBI:15378"/>
        <dbReference type="ChEBI" id="CHEBI:17509"/>
        <dbReference type="ChEBI" id="CHEBI:57443"/>
        <dbReference type="ChEBI" id="CHEBI:57834"/>
        <dbReference type="ChEBI" id="CHEBI:326268"/>
        <dbReference type="EC" id="2.5.1.16"/>
    </reaction>
</comment>
<comment type="pathway">
    <text evidence="2">Amine and polyamine biosynthesis; spermidine biosynthesis; spermidine from putrescine: step 1/1.</text>
</comment>
<comment type="subunit">
    <text evidence="2">Homodimer or homotetramer.</text>
</comment>
<comment type="subcellular location">
    <subcellularLocation>
        <location evidence="2">Cytoplasm</location>
    </subcellularLocation>
</comment>
<comment type="similarity">
    <text evidence="2">Belongs to the spermidine/spermine synthase family.</text>
</comment>